<sequence length="825" mass="95295">MSMSHLYGKDEDSDGVEMENFEITDWDLQNEFNPNRRKHFQTKEEATYGMWAERDSDDERPSFGGKRSRDYSAPVNFISAGIRKPAAEEKSDSDSDSETQARRETFPKDFEAKKLRTGGNFKPSQRTFAGGIKSNTDFGSWERHTKGIGQKLLQKMGYVQGRGLGKNAQGIIAPIEAKQRKGKGAVGAYGSERTKQSIKDFPVVDSEEEEEKEFQKEMSQWRKDPGGGKKKPKYSYKTVEELKAKGKVGKSLSAPQKEISQVKVIDMTGREQKVYYSYSQLAHKHNIPGEAPGQGAKEEKPQGFALPELEHNLQLLIDMTEQEIIQNDRQLQYEQDMVVNLTHELEKLSEVLEREEKAIQNLSKVLETVEECERRIQPMCDNPLTLEECARIFEMLQDKYYEEYKMSEKADLSVAIVYPLMKDYFKDWNPLRDPTYGTDVMSKWKNLLEEGHLLSHSAHDASMDPYHRLLWETWVPLLRSIIAQWQPRNCAPMVDFLDCWVHLLPVWILDNILDQLIFPKLQKEVENWNPLTDTVPIHSWIHPWLPLMQSRLEPLFSPIRNKLANALQKWHPSDSSAKLILQPWKEVFTPGSWEAFMVKNILPKLGMCLSEFVINPHQQHMEVFHWVTDWEGMVSLSSIVGILEKHFFPKWLQVLCSWLSNNPNYEEITKWYLGWKSMFSDLVLAHPAIKDKFNEALDIMNRAVSSSVGAYMQPGARESIAYLTQTERRKDFQYEAMQERRDAESIAQRGIGAAAAVPMNFKDLIQSKAEEHNIVFMPLIGKRHEGKQLYNFNRIVIYIDRGVVFVQGEKTWVPTSLQSLIDMAK</sequence>
<organism>
    <name type="scientific">Xenopus tropicalis</name>
    <name type="common">Western clawed frog</name>
    <name type="synonym">Silurana tropicalis</name>
    <dbReference type="NCBI Taxonomy" id="8364"/>
    <lineage>
        <taxon>Eukaryota</taxon>
        <taxon>Metazoa</taxon>
        <taxon>Chordata</taxon>
        <taxon>Craniata</taxon>
        <taxon>Vertebrata</taxon>
        <taxon>Euteleostomi</taxon>
        <taxon>Amphibia</taxon>
        <taxon>Batrachia</taxon>
        <taxon>Anura</taxon>
        <taxon>Pipoidea</taxon>
        <taxon>Pipidae</taxon>
        <taxon>Xenopodinae</taxon>
        <taxon>Xenopus</taxon>
        <taxon>Silurana</taxon>
    </lineage>
</organism>
<comment type="function">
    <text evidence="1">Involved in pre-mRNA splicing, specifically in spliceosome disassembly during late-stage splicing events.</text>
</comment>
<comment type="subunit">
    <text evidence="1">Identified in the spliceosome C complex.</text>
</comment>
<comment type="subcellular location">
    <subcellularLocation>
        <location evidence="1">Nucleus</location>
    </subcellularLocation>
</comment>
<comment type="similarity">
    <text evidence="4">Belongs to the TFP11/STIP family.</text>
</comment>
<evidence type="ECO:0000250" key="1"/>
<evidence type="ECO:0000255" key="2">
    <source>
        <dbReference type="PROSITE-ProRule" id="PRU00092"/>
    </source>
</evidence>
<evidence type="ECO:0000256" key="3">
    <source>
        <dbReference type="SAM" id="MobiDB-lite"/>
    </source>
</evidence>
<evidence type="ECO:0000305" key="4"/>
<feature type="chain" id="PRO_0000342282" description="Tuftelin-interacting protein 11">
    <location>
        <begin position="1"/>
        <end position="825"/>
    </location>
</feature>
<feature type="domain" description="G-patch" evidence="2">
    <location>
        <begin position="145"/>
        <end position="191"/>
    </location>
</feature>
<feature type="region of interest" description="Disordered" evidence="3">
    <location>
        <begin position="1"/>
        <end position="135"/>
    </location>
</feature>
<feature type="compositionally biased region" description="Acidic residues" evidence="3">
    <location>
        <begin position="11"/>
        <end position="25"/>
    </location>
</feature>
<feature type="compositionally biased region" description="Basic and acidic residues" evidence="3">
    <location>
        <begin position="41"/>
        <end position="61"/>
    </location>
</feature>
<feature type="compositionally biased region" description="Basic and acidic residues" evidence="3">
    <location>
        <begin position="85"/>
        <end position="114"/>
    </location>
</feature>
<feature type="compositionally biased region" description="Polar residues" evidence="3">
    <location>
        <begin position="122"/>
        <end position="135"/>
    </location>
</feature>
<feature type="sequence conflict" description="In Ref. 2; AAI21498." evidence="4" ref="2">
    <original>K</original>
    <variation>Q</variation>
    <location>
        <position position="357"/>
    </location>
</feature>
<feature type="sequence conflict" description="In Ref. 2; AAI21498." evidence="4" ref="2">
    <original>N</original>
    <variation>T</variation>
    <location>
        <position position="662"/>
    </location>
</feature>
<gene>
    <name type="primary">tfip11</name>
    <name type="synonym">stip</name>
</gene>
<protein>
    <recommendedName>
        <fullName>Tuftelin-interacting protein 11</fullName>
    </recommendedName>
    <alternativeName>
        <fullName>Septin and tuftelin-interacting protein 1</fullName>
        <shortName>STIP-1</shortName>
    </alternativeName>
</protein>
<reference key="1">
    <citation type="journal article" date="2007" name="Exp. Cell Res.">
        <title>Characterization of STIP, a multi-domain nuclear protein, highly conserved in metazoans, and essential for embryogenesis in Caenorhabditis elegans.</title>
        <authorList>
            <person name="Ji Q."/>
            <person name="Huang C.-H."/>
            <person name="Peng J."/>
            <person name="Hashmi S."/>
            <person name="Ye T."/>
            <person name="Chen Y."/>
        </authorList>
    </citation>
    <scope>NUCLEOTIDE SEQUENCE [MRNA]</scope>
</reference>
<reference key="2">
    <citation type="submission" date="2006-08" db="EMBL/GenBank/DDBJ databases">
        <authorList>
            <consortium name="NIH - Xenopus Gene Collection (XGC) project"/>
        </authorList>
    </citation>
    <scope>NUCLEOTIDE SEQUENCE [LARGE SCALE MRNA]</scope>
    <source>
        <tissue>Testis</tissue>
    </source>
</reference>
<dbReference type="EMBL" id="DQ342032">
    <property type="protein sequence ID" value="ABC69924.1"/>
    <property type="molecule type" value="mRNA"/>
</dbReference>
<dbReference type="EMBL" id="BC121497">
    <property type="protein sequence ID" value="AAI21498.1"/>
    <property type="molecule type" value="mRNA"/>
</dbReference>
<dbReference type="RefSeq" id="NP_001090845.1">
    <property type="nucleotide sequence ID" value="NM_001097376.1"/>
</dbReference>
<dbReference type="RefSeq" id="XP_031755580.1">
    <property type="nucleotide sequence ID" value="XM_031899720.1"/>
</dbReference>
<dbReference type="RefSeq" id="XP_031755581.1">
    <property type="nucleotide sequence ID" value="XM_031899721.1"/>
</dbReference>
<dbReference type="RefSeq" id="XP_031755582.1">
    <property type="nucleotide sequence ID" value="XM_031899722.1"/>
</dbReference>
<dbReference type="SMR" id="Q0IIX9"/>
<dbReference type="FunCoup" id="Q0IIX9">
    <property type="interactions" value="3115"/>
</dbReference>
<dbReference type="STRING" id="8364.ENSXETP00000017852"/>
<dbReference type="PaxDb" id="8364-ENSXETP00000008231"/>
<dbReference type="DNASU" id="100038256"/>
<dbReference type="GeneID" id="100038256"/>
<dbReference type="KEGG" id="xtr:100038256"/>
<dbReference type="AGR" id="Xenbase:XB-GENE-984521"/>
<dbReference type="CTD" id="24144"/>
<dbReference type="Xenbase" id="XB-GENE-984521">
    <property type="gene designation" value="tfip11"/>
</dbReference>
<dbReference type="eggNOG" id="KOG2184">
    <property type="taxonomic scope" value="Eukaryota"/>
</dbReference>
<dbReference type="InParanoid" id="Q0IIX9"/>
<dbReference type="OrthoDB" id="4822at2759"/>
<dbReference type="Proteomes" id="UP000008143">
    <property type="component" value="Chromosome 4"/>
</dbReference>
<dbReference type="Bgee" id="ENSXETG00000003784">
    <property type="expression patterns" value="Expressed in blastula and 13 other cell types or tissues"/>
</dbReference>
<dbReference type="GO" id="GO:0005681">
    <property type="term" value="C:spliceosomal complex"/>
    <property type="evidence" value="ECO:0000250"/>
    <property type="project" value="UniProtKB"/>
</dbReference>
<dbReference type="GO" id="GO:0003676">
    <property type="term" value="F:nucleic acid binding"/>
    <property type="evidence" value="ECO:0007669"/>
    <property type="project" value="InterPro"/>
</dbReference>
<dbReference type="GO" id="GO:0000390">
    <property type="term" value="P:spliceosomal complex disassembly"/>
    <property type="evidence" value="ECO:0007669"/>
    <property type="project" value="InterPro"/>
</dbReference>
<dbReference type="InterPro" id="IPR000467">
    <property type="entry name" value="G_patch_dom"/>
</dbReference>
<dbReference type="InterPro" id="IPR022783">
    <property type="entry name" value="GCFC_dom"/>
</dbReference>
<dbReference type="InterPro" id="IPR022159">
    <property type="entry name" value="STIP/TFIP11_N"/>
</dbReference>
<dbReference type="InterPro" id="IPR024933">
    <property type="entry name" value="TFP11"/>
</dbReference>
<dbReference type="InterPro" id="IPR045211">
    <property type="entry name" value="TFP11/STIP/Ntr1"/>
</dbReference>
<dbReference type="PANTHER" id="PTHR23329:SF1">
    <property type="entry name" value="TUFTELIN-INTERACTING PROTEIN 11"/>
    <property type="match status" value="1"/>
</dbReference>
<dbReference type="PANTHER" id="PTHR23329">
    <property type="entry name" value="TUFTELIN-INTERACTING PROTEIN 11-RELATED"/>
    <property type="match status" value="1"/>
</dbReference>
<dbReference type="Pfam" id="PF01585">
    <property type="entry name" value="G-patch"/>
    <property type="match status" value="1"/>
</dbReference>
<dbReference type="Pfam" id="PF07842">
    <property type="entry name" value="GCFC"/>
    <property type="match status" value="1"/>
</dbReference>
<dbReference type="Pfam" id="PF12457">
    <property type="entry name" value="TIP_N"/>
    <property type="match status" value="1"/>
</dbReference>
<dbReference type="PIRSF" id="PIRSF017706">
    <property type="entry name" value="TFIP11"/>
    <property type="match status" value="1"/>
</dbReference>
<dbReference type="SMART" id="SM00443">
    <property type="entry name" value="G_patch"/>
    <property type="match status" value="1"/>
</dbReference>
<dbReference type="PROSITE" id="PS50174">
    <property type="entry name" value="G_PATCH"/>
    <property type="match status" value="1"/>
</dbReference>
<accession>Q0IIX9</accession>
<accession>A1XD99</accession>
<keyword id="KW-0507">mRNA processing</keyword>
<keyword id="KW-0508">mRNA splicing</keyword>
<keyword id="KW-0539">Nucleus</keyword>
<keyword id="KW-1185">Reference proteome</keyword>
<keyword id="KW-0747">Spliceosome</keyword>
<name>TFP11_XENTR</name>
<proteinExistence type="evidence at transcript level"/>